<keyword id="KW-0963">Cytoplasm</keyword>
<keyword id="KW-0441">Lipid A biosynthesis</keyword>
<keyword id="KW-0444">Lipid biosynthesis</keyword>
<keyword id="KW-0443">Lipid metabolism</keyword>
<keyword id="KW-0456">Lyase</keyword>
<protein>
    <recommendedName>
        <fullName evidence="1">3-hydroxyacyl-[acyl-carrier-protein] dehydratase FabZ</fullName>
        <ecNumber evidence="1">4.2.1.59</ecNumber>
    </recommendedName>
    <alternativeName>
        <fullName evidence="1">(3R)-hydroxymyristoyl-[acyl-carrier-protein] dehydratase</fullName>
        <shortName evidence="1">(3R)-hydroxymyristoyl-ACP dehydrase</shortName>
    </alternativeName>
    <alternativeName>
        <fullName evidence="1">Beta-hydroxyacyl-ACP dehydratase</fullName>
    </alternativeName>
</protein>
<sequence length="150" mass="16913">METVKKPIDLNEIKTLIPHRYPMLLVDKVIDHEPGKTLHAIKNVTINEPVFTGHFPELAIFPGVLILEALAQATGILGFKSTEGRGDNEMYLFASIDKAKFKKPVLPGDTMHLHVEFLKERRGMWKFYGEARVDGKVVCSADLMCARRPL</sequence>
<organism>
    <name type="scientific">Colwellia psychrerythraea (strain 34H / ATCC BAA-681)</name>
    <name type="common">Vibrio psychroerythus</name>
    <dbReference type="NCBI Taxonomy" id="167879"/>
    <lineage>
        <taxon>Bacteria</taxon>
        <taxon>Pseudomonadati</taxon>
        <taxon>Pseudomonadota</taxon>
        <taxon>Gammaproteobacteria</taxon>
        <taxon>Alteromonadales</taxon>
        <taxon>Colwelliaceae</taxon>
        <taxon>Colwellia</taxon>
    </lineage>
</organism>
<proteinExistence type="inferred from homology"/>
<dbReference type="EC" id="4.2.1.59" evidence="1"/>
<dbReference type="EMBL" id="CP000083">
    <property type="protein sequence ID" value="AAZ24391.1"/>
    <property type="molecule type" value="Genomic_DNA"/>
</dbReference>
<dbReference type="RefSeq" id="WP_011042400.1">
    <property type="nucleotide sequence ID" value="NC_003910.7"/>
</dbReference>
<dbReference type="SMR" id="Q485F9"/>
<dbReference type="STRING" id="167879.CPS_1564"/>
<dbReference type="KEGG" id="cps:CPS_1564"/>
<dbReference type="eggNOG" id="COG0764">
    <property type="taxonomic scope" value="Bacteria"/>
</dbReference>
<dbReference type="HOGENOM" id="CLU_078912_1_0_6"/>
<dbReference type="Proteomes" id="UP000000547">
    <property type="component" value="Chromosome"/>
</dbReference>
<dbReference type="GO" id="GO:0005737">
    <property type="term" value="C:cytoplasm"/>
    <property type="evidence" value="ECO:0007669"/>
    <property type="project" value="UniProtKB-SubCell"/>
</dbReference>
<dbReference type="GO" id="GO:0016020">
    <property type="term" value="C:membrane"/>
    <property type="evidence" value="ECO:0007669"/>
    <property type="project" value="GOC"/>
</dbReference>
<dbReference type="GO" id="GO:0019171">
    <property type="term" value="F:(3R)-hydroxyacyl-[acyl-carrier-protein] dehydratase activity"/>
    <property type="evidence" value="ECO:0007669"/>
    <property type="project" value="UniProtKB-EC"/>
</dbReference>
<dbReference type="GO" id="GO:0006633">
    <property type="term" value="P:fatty acid biosynthetic process"/>
    <property type="evidence" value="ECO:0007669"/>
    <property type="project" value="UniProtKB-UniRule"/>
</dbReference>
<dbReference type="GO" id="GO:0009245">
    <property type="term" value="P:lipid A biosynthetic process"/>
    <property type="evidence" value="ECO:0007669"/>
    <property type="project" value="UniProtKB-UniRule"/>
</dbReference>
<dbReference type="CDD" id="cd01288">
    <property type="entry name" value="FabZ"/>
    <property type="match status" value="1"/>
</dbReference>
<dbReference type="FunFam" id="3.10.129.10:FF:000001">
    <property type="entry name" value="3-hydroxyacyl-[acyl-carrier-protein] dehydratase FabZ"/>
    <property type="match status" value="1"/>
</dbReference>
<dbReference type="Gene3D" id="3.10.129.10">
    <property type="entry name" value="Hotdog Thioesterase"/>
    <property type="match status" value="1"/>
</dbReference>
<dbReference type="HAMAP" id="MF_00406">
    <property type="entry name" value="FabZ"/>
    <property type="match status" value="1"/>
</dbReference>
<dbReference type="InterPro" id="IPR013114">
    <property type="entry name" value="FabA_FabZ"/>
</dbReference>
<dbReference type="InterPro" id="IPR010084">
    <property type="entry name" value="FabZ"/>
</dbReference>
<dbReference type="InterPro" id="IPR029069">
    <property type="entry name" value="HotDog_dom_sf"/>
</dbReference>
<dbReference type="NCBIfam" id="TIGR01750">
    <property type="entry name" value="fabZ"/>
    <property type="match status" value="1"/>
</dbReference>
<dbReference type="NCBIfam" id="NF000582">
    <property type="entry name" value="PRK00006.1"/>
    <property type="match status" value="1"/>
</dbReference>
<dbReference type="PANTHER" id="PTHR30272">
    <property type="entry name" value="3-HYDROXYACYL-[ACYL-CARRIER-PROTEIN] DEHYDRATASE"/>
    <property type="match status" value="1"/>
</dbReference>
<dbReference type="PANTHER" id="PTHR30272:SF1">
    <property type="entry name" value="3-HYDROXYACYL-[ACYL-CARRIER-PROTEIN] DEHYDRATASE"/>
    <property type="match status" value="1"/>
</dbReference>
<dbReference type="Pfam" id="PF07977">
    <property type="entry name" value="FabA"/>
    <property type="match status" value="1"/>
</dbReference>
<dbReference type="SUPFAM" id="SSF54637">
    <property type="entry name" value="Thioesterase/thiol ester dehydrase-isomerase"/>
    <property type="match status" value="1"/>
</dbReference>
<accession>Q485F9</accession>
<feature type="chain" id="PRO_0000230810" description="3-hydroxyacyl-[acyl-carrier-protein] dehydratase FabZ">
    <location>
        <begin position="1"/>
        <end position="150"/>
    </location>
</feature>
<feature type="active site" evidence="1">
    <location>
        <position position="54"/>
    </location>
</feature>
<comment type="function">
    <text evidence="1">Involved in unsaturated fatty acids biosynthesis. Catalyzes the dehydration of short chain beta-hydroxyacyl-ACPs and long chain saturated and unsaturated beta-hydroxyacyl-ACPs.</text>
</comment>
<comment type="catalytic activity">
    <reaction evidence="1">
        <text>a (3R)-hydroxyacyl-[ACP] = a (2E)-enoyl-[ACP] + H2O</text>
        <dbReference type="Rhea" id="RHEA:13097"/>
        <dbReference type="Rhea" id="RHEA-COMP:9925"/>
        <dbReference type="Rhea" id="RHEA-COMP:9945"/>
        <dbReference type="ChEBI" id="CHEBI:15377"/>
        <dbReference type="ChEBI" id="CHEBI:78784"/>
        <dbReference type="ChEBI" id="CHEBI:78827"/>
        <dbReference type="EC" id="4.2.1.59"/>
    </reaction>
</comment>
<comment type="subcellular location">
    <subcellularLocation>
        <location evidence="1">Cytoplasm</location>
    </subcellularLocation>
</comment>
<comment type="similarity">
    <text evidence="1">Belongs to the thioester dehydratase family. FabZ subfamily.</text>
</comment>
<name>FABZ_COLP3</name>
<evidence type="ECO:0000255" key="1">
    <source>
        <dbReference type="HAMAP-Rule" id="MF_00406"/>
    </source>
</evidence>
<reference key="1">
    <citation type="journal article" date="2005" name="Proc. Natl. Acad. Sci. U.S.A.">
        <title>The psychrophilic lifestyle as revealed by the genome sequence of Colwellia psychrerythraea 34H through genomic and proteomic analyses.</title>
        <authorList>
            <person name="Methe B.A."/>
            <person name="Nelson K.E."/>
            <person name="Deming J.W."/>
            <person name="Momen B."/>
            <person name="Melamud E."/>
            <person name="Zhang X."/>
            <person name="Moult J."/>
            <person name="Madupu R."/>
            <person name="Nelson W.C."/>
            <person name="Dodson R.J."/>
            <person name="Brinkac L.M."/>
            <person name="Daugherty S.C."/>
            <person name="Durkin A.S."/>
            <person name="DeBoy R.T."/>
            <person name="Kolonay J.F."/>
            <person name="Sullivan S.A."/>
            <person name="Zhou L."/>
            <person name="Davidsen T.M."/>
            <person name="Wu M."/>
            <person name="Huston A.L."/>
            <person name="Lewis M."/>
            <person name="Weaver B."/>
            <person name="Weidman J.F."/>
            <person name="Khouri H."/>
            <person name="Utterback T.R."/>
            <person name="Feldblyum T.V."/>
            <person name="Fraser C.M."/>
        </authorList>
    </citation>
    <scope>NUCLEOTIDE SEQUENCE [LARGE SCALE GENOMIC DNA]</scope>
    <source>
        <strain>34H / ATCC BAA-681</strain>
    </source>
</reference>
<gene>
    <name evidence="1" type="primary">fabZ</name>
    <name type="ordered locus">CPS_1564</name>
</gene>